<gene>
    <name evidence="1" type="primary">matK</name>
</gene>
<protein>
    <recommendedName>
        <fullName evidence="1">Maturase K</fullName>
    </recommendedName>
    <alternativeName>
        <fullName evidence="1">Intron maturase</fullName>
    </alternativeName>
</protein>
<proteinExistence type="inferred from homology"/>
<comment type="function">
    <text evidence="1">Usually encoded in the trnK tRNA gene intron. Probably assists in splicing its own and other chloroplast group II introns.</text>
</comment>
<comment type="subcellular location">
    <subcellularLocation>
        <location>Plastid</location>
        <location>Chloroplast</location>
    </subcellularLocation>
</comment>
<comment type="similarity">
    <text evidence="1">Belongs to the intron maturase 2 family. MatK subfamily.</text>
</comment>
<dbReference type="EMBL" id="AB125041">
    <property type="protein sequence ID" value="BAD14104.1"/>
    <property type="molecule type" value="Genomic_DNA"/>
</dbReference>
<dbReference type="GO" id="GO:0009507">
    <property type="term" value="C:chloroplast"/>
    <property type="evidence" value="ECO:0007669"/>
    <property type="project" value="UniProtKB-SubCell"/>
</dbReference>
<dbReference type="GO" id="GO:0003723">
    <property type="term" value="F:RNA binding"/>
    <property type="evidence" value="ECO:0007669"/>
    <property type="project" value="UniProtKB-KW"/>
</dbReference>
<dbReference type="GO" id="GO:0006397">
    <property type="term" value="P:mRNA processing"/>
    <property type="evidence" value="ECO:0007669"/>
    <property type="project" value="UniProtKB-KW"/>
</dbReference>
<dbReference type="GO" id="GO:0008380">
    <property type="term" value="P:RNA splicing"/>
    <property type="evidence" value="ECO:0007669"/>
    <property type="project" value="UniProtKB-UniRule"/>
</dbReference>
<dbReference type="GO" id="GO:0008033">
    <property type="term" value="P:tRNA processing"/>
    <property type="evidence" value="ECO:0007669"/>
    <property type="project" value="UniProtKB-KW"/>
</dbReference>
<dbReference type="HAMAP" id="MF_01390">
    <property type="entry name" value="MatK"/>
    <property type="match status" value="1"/>
</dbReference>
<dbReference type="InterPro" id="IPR024937">
    <property type="entry name" value="Domain_X"/>
</dbReference>
<dbReference type="InterPro" id="IPR002866">
    <property type="entry name" value="Maturase_MatK"/>
</dbReference>
<dbReference type="InterPro" id="IPR024942">
    <property type="entry name" value="Maturase_MatK_N"/>
</dbReference>
<dbReference type="PANTHER" id="PTHR34811">
    <property type="entry name" value="MATURASE K"/>
    <property type="match status" value="1"/>
</dbReference>
<dbReference type="PANTHER" id="PTHR34811:SF1">
    <property type="entry name" value="MATURASE K"/>
    <property type="match status" value="1"/>
</dbReference>
<dbReference type="Pfam" id="PF01348">
    <property type="entry name" value="Intron_maturas2"/>
    <property type="match status" value="1"/>
</dbReference>
<dbReference type="Pfam" id="PF01824">
    <property type="entry name" value="MatK_N"/>
    <property type="match status" value="1"/>
</dbReference>
<organism>
    <name type="scientific">Quercus petraea</name>
    <name type="common">Durmast oak</name>
    <dbReference type="NCBI Taxonomy" id="38865"/>
    <lineage>
        <taxon>Eukaryota</taxon>
        <taxon>Viridiplantae</taxon>
        <taxon>Streptophyta</taxon>
        <taxon>Embryophyta</taxon>
        <taxon>Tracheophyta</taxon>
        <taxon>Spermatophyta</taxon>
        <taxon>Magnoliopsida</taxon>
        <taxon>eudicotyledons</taxon>
        <taxon>Gunneridae</taxon>
        <taxon>Pentapetalae</taxon>
        <taxon>rosids</taxon>
        <taxon>fabids</taxon>
        <taxon>Fagales</taxon>
        <taxon>Fagaceae</taxon>
        <taxon>Quercus</taxon>
    </lineage>
</organism>
<feature type="chain" id="PRO_0000143665" description="Maturase K">
    <location>
        <begin position="1"/>
        <end position="504"/>
    </location>
</feature>
<evidence type="ECO:0000255" key="1">
    <source>
        <dbReference type="HAMAP-Rule" id="MF_01390"/>
    </source>
</evidence>
<geneLocation type="chloroplast"/>
<name>MATK_QUEPE</name>
<accession>Q75VA8</accession>
<reference key="1">
    <citation type="journal article" date="2003" name="Tropics">
        <title>Phylogeny and genetic variation of Fagaceae in tropical montane forests.</title>
        <authorList>
            <person name="Kamiya K."/>
            <person name="Harada K."/>
            <person name="Ogino K."/>
            <person name="Mahani M.C."/>
            <person name="Latiff A."/>
        </authorList>
    </citation>
    <scope>NUCLEOTIDE SEQUENCE [GENOMIC DNA]</scope>
</reference>
<keyword id="KW-0150">Chloroplast</keyword>
<keyword id="KW-0507">mRNA processing</keyword>
<keyword id="KW-0934">Plastid</keyword>
<keyword id="KW-0694">RNA-binding</keyword>
<keyword id="KW-0819">tRNA processing</keyword>
<sequence>MEEFQGYLELDIFRQHDFLYPLIFREYSYALGHGHGLNRYMLLENIGYDNKSSLLIVKRLITTMYQQNYLIISANDSKQNPFFGYNKNLHSKILSEGFAIIVEIPFYLRLISSLEGAEIVRFYNLRSIHSIFPFLEEKFPHLNYSADILIPYPAHLEILVQTLRYRVKDASYLHLLRFFLHEYSNCNSLIITNKSISIFSKSNPRFFLFLYNSYICEYESIFLFLRNQSSHLRLTSSGVLFERLCLYRKIEHFAEVFANDFPVIPCFLKDPFMHYVRYQGKSILASKDTPLLMNKWKSYLVNLWQCHFDVWSHAASIRINQLSKHSLDFLSYFSSVRRNPAVVRNQMLENSFLLNNAPNKLDTIVPIIPLIGSLAKAKFCNAVGHPISKLTRADLSDFEIINRFLHICRNLSHYYSGSSKKKNMYRIKYILRLSCVKTLARKHKSTARAFLKRVDSEFFQEFFTEEGGFISLIFPRASFALRRLYSGRVWYLDIIFINGLSNHE</sequence>